<keyword id="KW-0285">Flavoprotein</keyword>
<keyword id="KW-0288">FMN</keyword>
<keyword id="KW-0520">NAD</keyword>
<keyword id="KW-0521">NADP</keyword>
<keyword id="KW-0560">Oxidoreductase</keyword>
<keyword id="KW-1185">Reference proteome</keyword>
<feature type="chain" id="PRO_1000066141" description="Probable malonic semialdehyde reductase RutE">
    <location>
        <begin position="1"/>
        <end position="196"/>
    </location>
</feature>
<gene>
    <name evidence="1" type="primary">rutE</name>
    <name type="ordered locus">ESA_02366</name>
</gene>
<proteinExistence type="inferred from homology"/>
<name>RUTE_CROS8</name>
<sequence>MSEALSASALATLFIDARTHSAWRETPVSDAQLRDLYEMVRLGPTSANCSPGRLLFVTTPQAKARLKPALSSGNVEKTMQAPVTAIVAWDSEFYEALPTLFPYADARAWFTSSPAVAEETAFRNSSLQAGYLIMACRALGLDTGPMSGFDRAAVDAEFFSGTPWKSNLLINIGYGDSEKLHPRLPRLAFEDACAIV</sequence>
<protein>
    <recommendedName>
        <fullName evidence="1">Probable malonic semialdehyde reductase RutE</fullName>
        <ecNumber evidence="1">1.1.1.298</ecNumber>
    </recommendedName>
</protein>
<accession>A7MFX7</accession>
<comment type="function">
    <text evidence="1">May reduce toxic product malonic semialdehyde to 3-hydroxypropionic acid, which is excreted.</text>
</comment>
<comment type="catalytic activity">
    <reaction evidence="1">
        <text>3-hydroxypropanoate + NADP(+) = 3-oxopropanoate + NADPH + H(+)</text>
        <dbReference type="Rhea" id="RHEA:26438"/>
        <dbReference type="ChEBI" id="CHEBI:15378"/>
        <dbReference type="ChEBI" id="CHEBI:16510"/>
        <dbReference type="ChEBI" id="CHEBI:33190"/>
        <dbReference type="ChEBI" id="CHEBI:57783"/>
        <dbReference type="ChEBI" id="CHEBI:58349"/>
        <dbReference type="EC" id="1.1.1.298"/>
    </reaction>
</comment>
<comment type="cofactor">
    <cofactor evidence="1">
        <name>FMN</name>
        <dbReference type="ChEBI" id="CHEBI:58210"/>
    </cofactor>
</comment>
<comment type="similarity">
    <text evidence="1">Belongs to the nitroreductase family. HadB/RutE subfamily.</text>
</comment>
<organism>
    <name type="scientific">Cronobacter sakazakii (strain ATCC BAA-894)</name>
    <name type="common">Enterobacter sakazakii</name>
    <dbReference type="NCBI Taxonomy" id="290339"/>
    <lineage>
        <taxon>Bacteria</taxon>
        <taxon>Pseudomonadati</taxon>
        <taxon>Pseudomonadota</taxon>
        <taxon>Gammaproteobacteria</taxon>
        <taxon>Enterobacterales</taxon>
        <taxon>Enterobacteriaceae</taxon>
        <taxon>Cronobacter</taxon>
    </lineage>
</organism>
<reference key="1">
    <citation type="journal article" date="2010" name="PLoS ONE">
        <title>Genome sequence of Cronobacter sakazakii BAA-894 and comparative genomic hybridization analysis with other Cronobacter species.</title>
        <authorList>
            <person name="Kucerova E."/>
            <person name="Clifton S.W."/>
            <person name="Xia X.Q."/>
            <person name="Long F."/>
            <person name="Porwollik S."/>
            <person name="Fulton L."/>
            <person name="Fronick C."/>
            <person name="Minx P."/>
            <person name="Kyung K."/>
            <person name="Warren W."/>
            <person name="Fulton R."/>
            <person name="Feng D."/>
            <person name="Wollam A."/>
            <person name="Shah N."/>
            <person name="Bhonagiri V."/>
            <person name="Nash W.E."/>
            <person name="Hallsworth-Pepin K."/>
            <person name="Wilson R.K."/>
            <person name="McClelland M."/>
            <person name="Forsythe S.J."/>
        </authorList>
    </citation>
    <scope>NUCLEOTIDE SEQUENCE [LARGE SCALE GENOMIC DNA]</scope>
    <source>
        <strain>ATCC BAA-894</strain>
    </source>
</reference>
<dbReference type="EC" id="1.1.1.298" evidence="1"/>
<dbReference type="EMBL" id="CP000783">
    <property type="protein sequence ID" value="ABU77613.1"/>
    <property type="molecule type" value="Genomic_DNA"/>
</dbReference>
<dbReference type="RefSeq" id="WP_012125166.1">
    <property type="nucleotide sequence ID" value="NC_009778.1"/>
</dbReference>
<dbReference type="SMR" id="A7MFX7"/>
<dbReference type="KEGG" id="esa:ESA_02366"/>
<dbReference type="PATRIC" id="fig|290339.8.peg.2096"/>
<dbReference type="HOGENOM" id="CLU_084441_0_0_6"/>
<dbReference type="Proteomes" id="UP000000260">
    <property type="component" value="Chromosome"/>
</dbReference>
<dbReference type="GO" id="GO:0035527">
    <property type="term" value="F:3-hydroxypropionate dehydrogenase (NADP+) activity"/>
    <property type="evidence" value="ECO:0007669"/>
    <property type="project" value="UniProtKB-UniRule"/>
</dbReference>
<dbReference type="GO" id="GO:0019740">
    <property type="term" value="P:nitrogen utilization"/>
    <property type="evidence" value="ECO:0007669"/>
    <property type="project" value="UniProtKB-UniRule"/>
</dbReference>
<dbReference type="GO" id="GO:0006212">
    <property type="term" value="P:uracil catabolic process"/>
    <property type="evidence" value="ECO:0007669"/>
    <property type="project" value="UniProtKB-UniRule"/>
</dbReference>
<dbReference type="CDD" id="cd02148">
    <property type="entry name" value="RutE-like"/>
    <property type="match status" value="1"/>
</dbReference>
<dbReference type="Gene3D" id="3.40.109.10">
    <property type="entry name" value="NADH Oxidase"/>
    <property type="match status" value="1"/>
</dbReference>
<dbReference type="HAMAP" id="MF_01204">
    <property type="entry name" value="Oxidoreductase_RutE_HadB"/>
    <property type="match status" value="1"/>
</dbReference>
<dbReference type="InterPro" id="IPR029479">
    <property type="entry name" value="Nitroreductase"/>
</dbReference>
<dbReference type="InterPro" id="IPR000415">
    <property type="entry name" value="Nitroreductase-like"/>
</dbReference>
<dbReference type="InterPro" id="IPR050461">
    <property type="entry name" value="Nitroreductase_HadB/RutE"/>
</dbReference>
<dbReference type="InterPro" id="IPR023936">
    <property type="entry name" value="RutE-like"/>
</dbReference>
<dbReference type="NCBIfam" id="NF003768">
    <property type="entry name" value="PRK05365.1"/>
    <property type="match status" value="1"/>
</dbReference>
<dbReference type="PANTHER" id="PTHR43543">
    <property type="entry name" value="MALONIC SEMIALDEHYDE REDUCTASE RUTE-RELATED"/>
    <property type="match status" value="1"/>
</dbReference>
<dbReference type="PANTHER" id="PTHR43543:SF1">
    <property type="entry name" value="MALONIC SEMIALDEHYDE REDUCTASE RUTE-RELATED"/>
    <property type="match status" value="1"/>
</dbReference>
<dbReference type="Pfam" id="PF00881">
    <property type="entry name" value="Nitroreductase"/>
    <property type="match status" value="1"/>
</dbReference>
<dbReference type="SUPFAM" id="SSF55469">
    <property type="entry name" value="FMN-dependent nitroreductase-like"/>
    <property type="match status" value="1"/>
</dbReference>
<evidence type="ECO:0000255" key="1">
    <source>
        <dbReference type="HAMAP-Rule" id="MF_01204"/>
    </source>
</evidence>